<sequence length="3587" mass="404817">MSVFSKEQVQDMYALTPMQEGMLFHALLDQEHNSHLVQMSISLQGDLDVGLFTDSLHVLVERYDVFRTLFLYEKLKQPLQVVLKQRPIPIEFYDLSACDESEKQLRYTQYKRADQERTFHLAKDPLMRVALFQMSQHDYQVIWSFHHILMDGWCFSIIFDDLLAIYLSLQNKTALSLEPVQPYSRFINWLEKQNKQAALNYWSDYLEAYEQKTTLPKKEAAFAKAFQPTQYRFSLNRTLTKQLGTIASQNQVTLSTVIQTIWGVLLQKYNAAHDVLFGSVVSGRPTDIVGIDKMVGLFINTIPFRVQAKAGQTFSELLQAVHKRTLQSQPYEHVPLYDIQTQSVLKQELIDHLLVIENYPLVEALQKKALNQQIGFTITAVEMFEPTNYDLTVMVMPKEELAFRFDYNAALFDEQVVQKLAGHLQQIADCVANNSGVELCQIPLLTEAETSQLLAKRTETAADYPAATMHELFSRQAEKTPEQVAVVFADQHLTYRELDEKSNQLARFLRKKGIGTGSLVGTLLDRSLDMIVGILGVLKAGGAFVPIDPELPAERIAYMLTHSRVPLVVTQNHLRAKVTTPTETIDINTAVIGEESRAPIESLNQPHDLFYIIYTSGTTGQPKGVMLEHRNMANLMHFTFDQTNIAFHEKVLQYTTCSFDVCYQEIFSTLLSGGQLYLITNELRRHVEKLFAFIQEKQISILSLPVSFLKFIFNEQDYAQSFPRCVKHIITAGEQLVVTHELQKYLRQHRVFLHNHYGPSETHVVTTCTMDPGQAIPELPPIGKPISNTGIYILDEGLQLKPEGIVGELYISGANVGRGYLHQPELTAEKFLDNPYQPGERMYRTGDLALWLPDGQLEFLGRIDHQVKIRGHRIELGEIESRLLNHPAIKEAVVIDRADETGGKFLCAYVVLQKALSDEEMRAYLAQALPEYMIPSFFVTLERIPVTPNGKTDRRALPKPEGSAKTKADYVAPTTELEQKLVAIWEQILGVSPIGIQDHFFTLGGHSLKAIQLISRIQKECQADVPLRVLFEQPTIQALAAYVEGGEESAYLAIPQAEPQAYYPVSSAQKRMLILNQLDPHSTVYNLPVAMILEGTLDKARLEHAISNLVARHESLRTSFHTINGEPVSRIHEQGHLPIVYLETAEEQVNEVILGFMQPFDLVTAPLCRVGLVKLAENRHVLIIDMHHIISDGVSSQLILNDFSRLYQNKALPEQRIHYKDFAVWEKAWTQTTDYQKQEKYWLDRFAGEIPVLNLPMDYPRPAVQSFEGERYLFRTEKQLLESLQDVAQKTGTTLYMVLLAAYHVLLSKYSGQDDVMIGTVTAGRVHPDTESMTGMFVNTLAMRNQSAPTKTFRQFLLEVKDNTLAAFEHGQYPFEELVEKLAIQRNRSRNPLFDTLFILQNMDADLIELDGLTVTPYVPEGEVAKFDLSLEASENQAGLSFCFEFCTKLFARETIERMSLHYLQILQAVSANTEQELAQIEMLTAHEKQELLVHFNDTAALYPAESTLSQLFEDQAQKTPEQTAVVFGDKRLTYRELNERANQLAHTLRAKGVQAEQSVGIMAQRSLEMAIGIIAILKAGGAYVPIDPDYPNERIAYMLEDCRRLVLTQQQLAEKMTANVECLYLDEEGSYSPQTENIEPIHTAADLAYIIYTSGTTGRPKGVMVEHRGIVNSVTWNRDEFALSVRDSGTLSLSFAFDAFALTFFTLIVSGSTVVLMPDHEAKDPIALRNLIAAWECSYVVFVPSMFQAILECSTPADIRSIQAVMLGGEKLSPKLVQLCKAMHPQMSVMNAYGPTESSVMATYLRDTQPDQPITIGRPIANTAIYIVDQHHQLLPVGVVGEICIGGHGLARGYWKKPELTAEKFVANPAVPGERMYKTGDLGRWLHDGTIDFIGRVDDQIKVRGYRIEVGEIEAVLLAYDQTNEAIVVAYQDDRGDSYLAAYVTGKTAIEESELRAHLLRELPAYMVPTYLIQLDAFPLTPNGKVDRKALPKPEGKPATGAAYVAPATEVEAKLVAIWENALGISGVGVLDHFFELGGHSLKAMTVVAQVHREFQIDLLLKQFFAAPTIRDLARLIEHSEQAAGAAIQPAEPQAYYPVSSAQQRMYLLHQLEGAGISYNTPGIIMLEGKLDREQLANALQALVDRHDILRTSFEMVGDELVQKIHDRVAVNMEYVTAEEQQIDDLFHAFVRPFDLSVPPLLRMSLVKLADERHLLLYDMHHIAADAASITILFDELAELYQGRELPEMRIQYKDFAVWQKALHESDAFKQQEAYWLSTFAGNITAVDVPTDFPRPAVKSFAGGQVTLSMDQELLSALHELAAHTNTTLFMVLLAAYNVLLAKYAGQDDIIVGTPISGRSRAELAPVVGMFVHTLAIRNKPTAEKTFKQFLQEVKQNALDAFDHQDYPFESLVEKLGIPRDPGRNPLFDTMFILQNDELHAKTLDQLVYRPYESDSALDVAKFDLSFHLTERETDLFLRLEYCTKLFKQQTVERMAHHFLQILRAVTANPENELQEIEMLTAAEKQMLLVAFNDTHREYRADQTIQQLFEELAEKMPEHTALVFEEKRMSFRELNERANQLAAVLREKGVGPAQIVALLVERSAEMVIATLATLKAGGAFLPVDPDYPEERIRYMLEDSQAKLVVTHAHLLHKVSSQSEVVDVDDPGSYATQTDNLPCANTPSDLAYIIYTSGTTGKPKGVMLEHKGVANLQAVFAHHLGVTPQDRAGHFASISFDASVWDMFGPLLSGATLYVLSRDVINDFQRFAEYVRDNAITFLTLPPTYAIYLEPEQVPSLRTLITAGSASSVALVDKWKEKVTYVNGYGPTESTVCATLWKAKPDEPVETITIGKPIQNTKLYIVDDQLQLKAPGQMGELCISGLSLARGYWNRPELTAEKFVDNPFVPGTKMYRTGDLARWLPDGTIEYLGRIDHQVKIRGHRVELGEVESVLLRYDTVKEAAAITHEDDRGQAYLCAYYVAEGEATPAQLRAYMENELPNYMVPAFFIQLEKMPLTPNDKIDRKALPKPNQEENRTEQYAAPQTELEQLLAGIWADVLGIKQVGTQDNFFELGGDSIKAIQVSTRLNASGWTLAMKELFQYPTIEEAALRVIPNSRESEQGVVEGEIALTPIQKWFFANNFTDRHHWNQAVMLFREDGFDEGLVRQAFQQIVEHHDALRMVYKQEDGAIKQINRGLTDERFRFYSYDLKNHANSEARILELSDQIQSSIDLEHGPLVHVALFATKDGDHLLVAIHHLVVDGVSWRILFEDFSSAYSQALHQQEIVLPKKTDSFKDWAAQLQKYADSDELLREVAYWHNLETTTTTAALPTDFVTADRKQKHTRTLSFALTVPQTENLLRHVHHAYHTEMNDLLLTALGLAVKDWAHTNGVVINLEGHGREDIQNEMNVTRTIGWFTSQYPVVLDMEKAEDLPYQIKQTKENLRRIPKKGIGYEILRTLTTSQLQPPLAFTLRPEISFNYLGQFESDGKTGGFTFSPLGTGQLFSPESERVFLLDISAMIEDGELRISVGYSRLQYEEKTIASLADSYRKHLLGIIEHCMAKEEGEYTPSDLGDEELSMEELENILEWI</sequence>
<keyword id="KW-0002">3D-structure</keyword>
<keyword id="KW-0045">Antibiotic biosynthesis</keyword>
<keyword id="KW-0067">ATP-binding</keyword>
<keyword id="KW-0413">Isomerase</keyword>
<keyword id="KW-0436">Ligase</keyword>
<keyword id="KW-0511">Multifunctional enzyme</keyword>
<keyword id="KW-0547">Nucleotide-binding</keyword>
<keyword id="KW-0596">Phosphopantetheine</keyword>
<keyword id="KW-0597">Phosphoprotein</keyword>
<keyword id="KW-0677">Repeat</keyword>
<comment type="function">
    <text>Activates the second to fourth amino acids in tyrocidine (in tyrocidine A, Pro, Phe, and D-Phe) and epimerizes the last one.</text>
</comment>
<comment type="catalytic activity">
    <reaction>
        <text>L-phenylalanine + ATP + H2O = D-phenylalanine + AMP + diphosphate + H(+)</text>
        <dbReference type="Rhea" id="RHEA:20201"/>
        <dbReference type="ChEBI" id="CHEBI:15377"/>
        <dbReference type="ChEBI" id="CHEBI:15378"/>
        <dbReference type="ChEBI" id="CHEBI:30616"/>
        <dbReference type="ChEBI" id="CHEBI:33019"/>
        <dbReference type="ChEBI" id="CHEBI:57981"/>
        <dbReference type="ChEBI" id="CHEBI:58095"/>
        <dbReference type="ChEBI" id="CHEBI:456215"/>
        <dbReference type="EC" id="5.1.1.11"/>
    </reaction>
</comment>
<comment type="cofactor">
    <cofactor evidence="1">
        <name>pantetheine 4'-phosphate</name>
        <dbReference type="ChEBI" id="CHEBI:47942"/>
    </cofactor>
    <text evidence="1">Binds 3 phosphopantetheines covalently.</text>
</comment>
<comment type="pathway">
    <text>Antibiotic biosynthesis; tyrocidine biosynthesis.</text>
</comment>
<comment type="subunit">
    <text>Large multienzyme complex of TycA, TycB and TycC.</text>
</comment>
<comment type="domain">
    <text>Consists of three modules, including a C-terminal epimerization domain. Each module incorporates one amino acid into the peptide product and can be further subdivided into domains responsible for substrate adenylation, thiolation, condensation (not for the initiation module), and epimerization (optional), and N methylation (optional).</text>
</comment>
<comment type="miscellaneous">
    <text>Tyrocidine is a mixture of four cyclic decapeptides, tyrocidine A (D-Phe-Pro-Phe-D-Phe-Asn-Gln-Tyr-Val-Orn-Leu), B, C, and D, in which Phe, at positions 3, 4, and Tyr residues are gradually replaced by Trp, depending on the relative concentrations of these amino acids in the growth medium.</text>
</comment>
<comment type="similarity">
    <text evidence="4">Belongs to the ATP-dependent AMP-binding enzyme family.</text>
</comment>
<gene>
    <name type="primary">tycB</name>
</gene>
<reference key="1">
    <citation type="journal article" date="1997" name="J. Bacteriol.">
        <title>The tyrocidine biosynthesis operon of Bacillus brevis: complete nucleotide sequence and biochemical characterization of functional internal adenylation domains.</title>
        <authorList>
            <person name="Mootz H.D."/>
            <person name="Marahiel M.A."/>
        </authorList>
    </citation>
    <scope>NUCLEOTIDE SEQUENCE [GENOMIC DNA]</scope>
    <source>
        <strain>ATCC 8185 / DSM 362 / JCM 20017 / IAM 1031 / NBRC 3331 / NCDO 717 / NCIMB 8598 / NRS 751 / BG</strain>
    </source>
</reference>
<proteinExistence type="evidence at protein level"/>
<evidence type="ECO:0000250" key="1"/>
<evidence type="ECO:0000255" key="2">
    <source>
        <dbReference type="PROSITE-ProRule" id="PRU00258"/>
    </source>
</evidence>
<evidence type="ECO:0000256" key="3">
    <source>
        <dbReference type="SAM" id="MobiDB-lite"/>
    </source>
</evidence>
<evidence type="ECO:0000305" key="4"/>
<evidence type="ECO:0007829" key="5">
    <source>
        <dbReference type="PDB" id="6TA8"/>
    </source>
</evidence>
<protein>
    <recommendedName>
        <fullName>Tyrocidine synthase 2</fullName>
    </recommendedName>
    <alternativeName>
        <fullName>Tyrocidine synthase II</fullName>
    </alternativeName>
    <domain>
        <recommendedName>
            <fullName>ATP-dependent proline adenylase</fullName>
            <shortName>ProA</shortName>
        </recommendedName>
        <alternativeName>
            <fullName>Proline activase</fullName>
        </alternativeName>
    </domain>
    <domain>
        <recommendedName>
            <fullName>ATP-dependent phenylalanine adenylase</fullName>
            <shortName>PheA</shortName>
        </recommendedName>
        <alternativeName>
            <fullName>Phenylalanine activase</fullName>
        </alternativeName>
    </domain>
    <domain>
        <recommendedName>
            <fullName>ATP-dependent D-phenylalanine adenylase</fullName>
            <shortName>D-PheA</shortName>
        </recommendedName>
        <alternativeName>
            <fullName>D-phenylalanine activase</fullName>
        </alternativeName>
    </domain>
    <domain>
        <recommendedName>
            <fullName>Phenylalanine racemase [ATP-hydrolyzing]</fullName>
            <ecNumber>5.1.1.11</ecNumber>
        </recommendedName>
    </domain>
</protein>
<feature type="chain" id="PRO_0000193094" description="Tyrocidine synthase 2">
    <location>
        <begin position="1"/>
        <end position="3587"/>
    </location>
</feature>
<feature type="domain" description="Carrier 1" evidence="2">
    <location>
        <begin position="972"/>
        <end position="1047"/>
    </location>
</feature>
<feature type="domain" description="Carrier 2" evidence="2">
    <location>
        <begin position="2007"/>
        <end position="2082"/>
    </location>
</feature>
<feature type="domain" description="Carrier 3" evidence="2">
    <location>
        <begin position="3040"/>
        <end position="3114"/>
    </location>
</feature>
<feature type="region of interest" description="Domain 1 (Proline-activating)">
    <location>
        <begin position="466"/>
        <end position="1045"/>
    </location>
</feature>
<feature type="region of interest" description="Domain 2 (Phenylalanine-activating)">
    <location>
        <begin position="1522"/>
        <end position="2081"/>
    </location>
</feature>
<feature type="region of interest" description="Domain 3 (D-phenylalanine-activating)">
    <location>
        <begin position="2540"/>
        <end position="3122"/>
    </location>
</feature>
<feature type="region of interest" description="Disordered" evidence="3">
    <location>
        <begin position="3017"/>
        <end position="3040"/>
    </location>
</feature>
<feature type="compositionally biased region" description="Basic and acidic residues" evidence="3">
    <location>
        <begin position="3018"/>
        <end position="3035"/>
    </location>
</feature>
<feature type="modified residue" description="O-(pantetheine 4'-phosphoryl)serine" evidence="2">
    <location>
        <position position="1007"/>
    </location>
</feature>
<feature type="modified residue" description="O-(pantetheine 4'-phosphoryl)serine" evidence="2">
    <location>
        <position position="2042"/>
    </location>
</feature>
<feature type="modified residue" description="O-(pantetheine 4'-phosphoryl)serine" evidence="2">
    <location>
        <position position="3075"/>
    </location>
</feature>
<feature type="strand" evidence="5">
    <location>
        <begin position="3124"/>
        <end position="3126"/>
    </location>
</feature>
<feature type="helix" evidence="5">
    <location>
        <begin position="3130"/>
        <end position="3137"/>
    </location>
</feature>
<feature type="turn" evidence="5">
    <location>
        <begin position="3141"/>
        <end position="3144"/>
    </location>
</feature>
<feature type="strand" evidence="5">
    <location>
        <begin position="3146"/>
        <end position="3154"/>
    </location>
</feature>
<feature type="helix" evidence="5">
    <location>
        <begin position="3160"/>
        <end position="3173"/>
    </location>
</feature>
<feature type="helix" evidence="5">
    <location>
        <begin position="3175"/>
        <end position="3178"/>
    </location>
</feature>
<feature type="strand" evidence="5">
    <location>
        <begin position="3179"/>
        <end position="3182"/>
    </location>
</feature>
<feature type="helix" evidence="5">
    <location>
        <begin position="3184"/>
        <end position="3186"/>
    </location>
</feature>
<feature type="strand" evidence="5">
    <location>
        <begin position="3189"/>
        <end position="3192"/>
    </location>
</feature>
<feature type="strand" evidence="5">
    <location>
        <begin position="3195"/>
        <end position="3197"/>
    </location>
</feature>
<feature type="strand" evidence="5">
    <location>
        <begin position="3201"/>
        <end position="3206"/>
    </location>
</feature>
<feature type="helix" evidence="5">
    <location>
        <begin position="3213"/>
        <end position="3225"/>
    </location>
</feature>
<feature type="turn" evidence="5">
    <location>
        <begin position="3230"/>
        <end position="3232"/>
    </location>
</feature>
<feature type="strand" evidence="5">
    <location>
        <begin position="3236"/>
        <end position="3243"/>
    </location>
</feature>
<feature type="strand" evidence="5">
    <location>
        <begin position="3246"/>
        <end position="3254"/>
    </location>
</feature>
<feature type="helix" evidence="5">
    <location>
        <begin position="3255"/>
        <end position="3257"/>
    </location>
</feature>
<feature type="helix" evidence="5">
    <location>
        <begin position="3260"/>
        <end position="3278"/>
    </location>
</feature>
<feature type="helix" evidence="5">
    <location>
        <begin position="3292"/>
        <end position="3303"/>
    </location>
</feature>
<feature type="strand" evidence="5">
    <location>
        <begin position="3304"/>
        <end position="3306"/>
    </location>
</feature>
<feature type="helix" evidence="5">
    <location>
        <begin position="3308"/>
        <end position="3311"/>
    </location>
</feature>
<feature type="helix" evidence="5">
    <location>
        <begin position="3312"/>
        <end position="3320"/>
    </location>
</feature>
<feature type="helix" evidence="5">
    <location>
        <begin position="3338"/>
        <end position="3340"/>
    </location>
</feature>
<feature type="strand" evidence="5">
    <location>
        <begin position="3341"/>
        <end position="3347"/>
    </location>
</feature>
<feature type="helix" evidence="5">
    <location>
        <begin position="3350"/>
        <end position="3358"/>
    </location>
</feature>
<feature type="helix" evidence="5">
    <location>
        <begin position="3361"/>
        <end position="3364"/>
    </location>
</feature>
<feature type="helix" evidence="5">
    <location>
        <begin position="3368"/>
        <end position="3384"/>
    </location>
</feature>
<feature type="strand" evidence="5">
    <location>
        <begin position="3387"/>
        <end position="3395"/>
    </location>
</feature>
<feature type="strand" evidence="5">
    <location>
        <begin position="3416"/>
        <end position="3423"/>
    </location>
</feature>
<feature type="helix" evidence="5">
    <location>
        <begin position="3430"/>
        <end position="3442"/>
    </location>
</feature>
<feature type="helix" evidence="5">
    <location>
        <begin position="3445"/>
        <end position="3448"/>
    </location>
</feature>
<feature type="helix" evidence="5">
    <location>
        <begin position="3450"/>
        <end position="3456"/>
    </location>
</feature>
<feature type="strand" evidence="5">
    <location>
        <begin position="3473"/>
        <end position="3481"/>
    </location>
</feature>
<feature type="helix" evidence="5">
    <location>
        <begin position="3486"/>
        <end position="3488"/>
    </location>
</feature>
<feature type="strand" evidence="5">
    <location>
        <begin position="3491"/>
        <end position="3493"/>
    </location>
</feature>
<feature type="strand" evidence="5">
    <location>
        <begin position="3511"/>
        <end position="3519"/>
    </location>
</feature>
<feature type="strand" evidence="5">
    <location>
        <begin position="3522"/>
        <end position="3530"/>
    </location>
</feature>
<feature type="turn" evidence="5">
    <location>
        <begin position="3531"/>
        <end position="3533"/>
    </location>
</feature>
<feature type="helix" evidence="5">
    <location>
        <begin position="3536"/>
        <end position="3557"/>
    </location>
</feature>
<accession>O30408</accession>
<organism>
    <name type="scientific">Brevibacillus parabrevis</name>
    <dbReference type="NCBI Taxonomy" id="54914"/>
    <lineage>
        <taxon>Bacteria</taxon>
        <taxon>Bacillati</taxon>
        <taxon>Bacillota</taxon>
        <taxon>Bacilli</taxon>
        <taxon>Bacillales</taxon>
        <taxon>Paenibacillaceae</taxon>
        <taxon>Brevibacillus</taxon>
    </lineage>
</organism>
<dbReference type="EC" id="5.1.1.11"/>
<dbReference type="EMBL" id="AF004835">
    <property type="protein sequence ID" value="AAC45929.1"/>
    <property type="molecule type" value="Genomic_DNA"/>
</dbReference>
<dbReference type="PDB" id="6TA8">
    <property type="method" value="X-ray"/>
    <property type="resolution" value="2.40 A"/>
    <property type="chains" value="A/B=3113-3587"/>
</dbReference>
<dbReference type="PDB" id="9BFD">
    <property type="method" value="EM"/>
    <property type="resolution" value="2.97 A"/>
    <property type="chains" value="B=3-1044"/>
</dbReference>
<dbReference type="PDB" id="9BFE">
    <property type="method" value="EM"/>
    <property type="resolution" value="3.23 A"/>
    <property type="chains" value="B=3-1044"/>
</dbReference>
<dbReference type="PDB" id="9BFF">
    <property type="method" value="EM"/>
    <property type="resolution" value="3.31 A"/>
    <property type="chains" value="B=3-1044"/>
</dbReference>
<dbReference type="PDBsum" id="6TA8"/>
<dbReference type="PDBsum" id="9BFD"/>
<dbReference type="PDBsum" id="9BFE"/>
<dbReference type="PDBsum" id="9BFF"/>
<dbReference type="EMDB" id="EMD-44493"/>
<dbReference type="EMDB" id="EMD-44494"/>
<dbReference type="EMDB" id="EMD-44495"/>
<dbReference type="SMR" id="O30408"/>
<dbReference type="STRING" id="54914.AV540_22695"/>
<dbReference type="KEGG" id="ag:AAC45929"/>
<dbReference type="SABIO-RK" id="O30408"/>
<dbReference type="UniPathway" id="UPA00180"/>
<dbReference type="GO" id="GO:0005737">
    <property type="term" value="C:cytoplasm"/>
    <property type="evidence" value="ECO:0007669"/>
    <property type="project" value="TreeGrafter"/>
</dbReference>
<dbReference type="GO" id="GO:0005524">
    <property type="term" value="F:ATP binding"/>
    <property type="evidence" value="ECO:0007669"/>
    <property type="project" value="UniProtKB-KW"/>
</dbReference>
<dbReference type="GO" id="GO:0016874">
    <property type="term" value="F:ligase activity"/>
    <property type="evidence" value="ECO:0007669"/>
    <property type="project" value="UniProtKB-KW"/>
</dbReference>
<dbReference type="GO" id="GO:0047462">
    <property type="term" value="F:phenylalanine racemase (ATP-hydrolyzing) activity"/>
    <property type="evidence" value="ECO:0007669"/>
    <property type="project" value="UniProtKB-EC"/>
</dbReference>
<dbReference type="GO" id="GO:0031177">
    <property type="term" value="F:phosphopantetheine binding"/>
    <property type="evidence" value="ECO:0007669"/>
    <property type="project" value="InterPro"/>
</dbReference>
<dbReference type="GO" id="GO:0043041">
    <property type="term" value="P:amino acid activation for nonribosomal peptide biosynthetic process"/>
    <property type="evidence" value="ECO:0007669"/>
    <property type="project" value="TreeGrafter"/>
</dbReference>
<dbReference type="GO" id="GO:0017000">
    <property type="term" value="P:antibiotic biosynthetic process"/>
    <property type="evidence" value="ECO:0007669"/>
    <property type="project" value="UniProtKB-KW"/>
</dbReference>
<dbReference type="GO" id="GO:0008610">
    <property type="term" value="P:lipid biosynthetic process"/>
    <property type="evidence" value="ECO:0007669"/>
    <property type="project" value="UniProtKB-ARBA"/>
</dbReference>
<dbReference type="GO" id="GO:0044550">
    <property type="term" value="P:secondary metabolite biosynthetic process"/>
    <property type="evidence" value="ECO:0007669"/>
    <property type="project" value="TreeGrafter"/>
</dbReference>
<dbReference type="CDD" id="cd05930">
    <property type="entry name" value="A_NRPS"/>
    <property type="match status" value="1"/>
</dbReference>
<dbReference type="CDD" id="cd19543">
    <property type="entry name" value="DCL_NRPS"/>
    <property type="match status" value="1"/>
</dbReference>
<dbReference type="CDD" id="cd19534">
    <property type="entry name" value="E_NRPS"/>
    <property type="match status" value="1"/>
</dbReference>
<dbReference type="CDD" id="cd19531">
    <property type="entry name" value="LCL_NRPS-like"/>
    <property type="match status" value="2"/>
</dbReference>
<dbReference type="FunFam" id="3.30.300.30:FF:000010">
    <property type="entry name" value="Enterobactin synthetase component F"/>
    <property type="match status" value="3"/>
</dbReference>
<dbReference type="FunFam" id="3.40.50.12780:FF:000012">
    <property type="entry name" value="Non-ribosomal peptide synthetase"/>
    <property type="match status" value="3"/>
</dbReference>
<dbReference type="FunFam" id="3.40.50.980:FF:000001">
    <property type="entry name" value="Non-ribosomal peptide synthetase"/>
    <property type="match status" value="3"/>
</dbReference>
<dbReference type="FunFam" id="2.30.38.10:FF:000001">
    <property type="entry name" value="Non-ribosomal peptide synthetase PvdI"/>
    <property type="match status" value="3"/>
</dbReference>
<dbReference type="FunFam" id="3.30.559.10:FF:000016">
    <property type="entry name" value="Nonribosomal peptide synthase Pes1"/>
    <property type="match status" value="1"/>
</dbReference>
<dbReference type="FunFam" id="1.10.1200.10:FF:000005">
    <property type="entry name" value="Nonribosomal peptide synthetase 1"/>
    <property type="match status" value="3"/>
</dbReference>
<dbReference type="Gene3D" id="3.30.300.30">
    <property type="match status" value="3"/>
</dbReference>
<dbReference type="Gene3D" id="3.40.50.980">
    <property type="match status" value="6"/>
</dbReference>
<dbReference type="Gene3D" id="1.10.1200.10">
    <property type="entry name" value="ACP-like"/>
    <property type="match status" value="3"/>
</dbReference>
<dbReference type="Gene3D" id="3.30.559.10">
    <property type="entry name" value="Chloramphenicol acetyltransferase-like domain"/>
    <property type="match status" value="4"/>
</dbReference>
<dbReference type="Gene3D" id="2.30.38.10">
    <property type="entry name" value="Luciferase, Domain 3"/>
    <property type="match status" value="3"/>
</dbReference>
<dbReference type="Gene3D" id="3.30.559.30">
    <property type="entry name" value="Nonribosomal peptide synthetase, condensation domain"/>
    <property type="match status" value="4"/>
</dbReference>
<dbReference type="InterPro" id="IPR010071">
    <property type="entry name" value="AA_adenyl_dom"/>
</dbReference>
<dbReference type="InterPro" id="IPR036736">
    <property type="entry name" value="ACP-like_sf"/>
</dbReference>
<dbReference type="InterPro" id="IPR025110">
    <property type="entry name" value="AMP-bd_C"/>
</dbReference>
<dbReference type="InterPro" id="IPR045851">
    <property type="entry name" value="AMP-bd_C_sf"/>
</dbReference>
<dbReference type="InterPro" id="IPR020845">
    <property type="entry name" value="AMP-binding_CS"/>
</dbReference>
<dbReference type="InterPro" id="IPR000873">
    <property type="entry name" value="AMP-dep_synth/lig_dom"/>
</dbReference>
<dbReference type="InterPro" id="IPR023213">
    <property type="entry name" value="CAT-like_dom_sf"/>
</dbReference>
<dbReference type="InterPro" id="IPR001242">
    <property type="entry name" value="Condensatn"/>
</dbReference>
<dbReference type="InterPro" id="IPR010060">
    <property type="entry name" value="NRPS_synth"/>
</dbReference>
<dbReference type="InterPro" id="IPR020806">
    <property type="entry name" value="PKS_PP-bd"/>
</dbReference>
<dbReference type="InterPro" id="IPR009081">
    <property type="entry name" value="PP-bd_ACP"/>
</dbReference>
<dbReference type="InterPro" id="IPR006162">
    <property type="entry name" value="Ppantetheine_attach_site"/>
</dbReference>
<dbReference type="NCBIfam" id="TIGR01733">
    <property type="entry name" value="AA-adenyl-dom"/>
    <property type="match status" value="3"/>
</dbReference>
<dbReference type="NCBIfam" id="TIGR01720">
    <property type="entry name" value="NRPS-para261"/>
    <property type="match status" value="1"/>
</dbReference>
<dbReference type="NCBIfam" id="NF003417">
    <property type="entry name" value="PRK04813.1"/>
    <property type="match status" value="3"/>
</dbReference>
<dbReference type="PANTHER" id="PTHR45527:SF1">
    <property type="entry name" value="FATTY ACID SYNTHASE"/>
    <property type="match status" value="1"/>
</dbReference>
<dbReference type="PANTHER" id="PTHR45527">
    <property type="entry name" value="NONRIBOSOMAL PEPTIDE SYNTHETASE"/>
    <property type="match status" value="1"/>
</dbReference>
<dbReference type="Pfam" id="PF00501">
    <property type="entry name" value="AMP-binding"/>
    <property type="match status" value="3"/>
</dbReference>
<dbReference type="Pfam" id="PF13193">
    <property type="entry name" value="AMP-binding_C"/>
    <property type="match status" value="3"/>
</dbReference>
<dbReference type="Pfam" id="PF00668">
    <property type="entry name" value="Condensation"/>
    <property type="match status" value="4"/>
</dbReference>
<dbReference type="Pfam" id="PF00550">
    <property type="entry name" value="PP-binding"/>
    <property type="match status" value="3"/>
</dbReference>
<dbReference type="SMART" id="SM00823">
    <property type="entry name" value="PKS_PP"/>
    <property type="match status" value="3"/>
</dbReference>
<dbReference type="SUPFAM" id="SSF56801">
    <property type="entry name" value="Acetyl-CoA synthetase-like"/>
    <property type="match status" value="3"/>
</dbReference>
<dbReference type="SUPFAM" id="SSF47336">
    <property type="entry name" value="ACP-like"/>
    <property type="match status" value="3"/>
</dbReference>
<dbReference type="SUPFAM" id="SSF52777">
    <property type="entry name" value="CoA-dependent acyltransferases"/>
    <property type="match status" value="8"/>
</dbReference>
<dbReference type="PROSITE" id="PS00455">
    <property type="entry name" value="AMP_BINDING"/>
    <property type="match status" value="3"/>
</dbReference>
<dbReference type="PROSITE" id="PS50075">
    <property type="entry name" value="CARRIER"/>
    <property type="match status" value="3"/>
</dbReference>
<dbReference type="PROSITE" id="PS00012">
    <property type="entry name" value="PHOSPHOPANTETHEINE"/>
    <property type="match status" value="3"/>
</dbReference>
<name>TYCB_BREPA</name>